<organism>
    <name type="scientific">Prochlorococcus marinus (strain NATL1A)</name>
    <dbReference type="NCBI Taxonomy" id="167555"/>
    <lineage>
        <taxon>Bacteria</taxon>
        <taxon>Bacillati</taxon>
        <taxon>Cyanobacteriota</taxon>
        <taxon>Cyanophyceae</taxon>
        <taxon>Synechococcales</taxon>
        <taxon>Prochlorococcaceae</taxon>
        <taxon>Prochlorococcus</taxon>
    </lineage>
</organism>
<accession>A2C228</accession>
<keyword id="KW-0028">Amino-acid biosynthesis</keyword>
<keyword id="KW-0963">Cytoplasm</keyword>
<keyword id="KW-0368">Histidine biosynthesis</keyword>
<reference key="1">
    <citation type="journal article" date="2007" name="PLoS Genet.">
        <title>Patterns and implications of gene gain and loss in the evolution of Prochlorococcus.</title>
        <authorList>
            <person name="Kettler G.C."/>
            <person name="Martiny A.C."/>
            <person name="Huang K."/>
            <person name="Zucker J."/>
            <person name="Coleman M.L."/>
            <person name="Rodrigue S."/>
            <person name="Chen F."/>
            <person name="Lapidus A."/>
            <person name="Ferriera S."/>
            <person name="Johnson J."/>
            <person name="Steglich C."/>
            <person name="Church G.M."/>
            <person name="Richardson P."/>
            <person name="Chisholm S.W."/>
        </authorList>
    </citation>
    <scope>NUCLEOTIDE SEQUENCE [LARGE SCALE GENOMIC DNA]</scope>
    <source>
        <strain>NATL1A</strain>
    </source>
</reference>
<dbReference type="EMBL" id="CP000553">
    <property type="protein sequence ID" value="ABM75538.1"/>
    <property type="molecule type" value="Genomic_DNA"/>
</dbReference>
<dbReference type="RefSeq" id="WP_011823664.1">
    <property type="nucleotide sequence ID" value="NC_008819.1"/>
</dbReference>
<dbReference type="SMR" id="A2C228"/>
<dbReference type="KEGG" id="pme:NATL1_09801"/>
<dbReference type="eggNOG" id="COG3705">
    <property type="taxonomic scope" value="Bacteria"/>
</dbReference>
<dbReference type="HOGENOM" id="CLU_025113_0_2_3"/>
<dbReference type="UniPathway" id="UPA00031">
    <property type="reaction ID" value="UER00006"/>
</dbReference>
<dbReference type="Proteomes" id="UP000002592">
    <property type="component" value="Chromosome"/>
</dbReference>
<dbReference type="GO" id="GO:0005737">
    <property type="term" value="C:cytoplasm"/>
    <property type="evidence" value="ECO:0007669"/>
    <property type="project" value="UniProtKB-SubCell"/>
</dbReference>
<dbReference type="GO" id="GO:0004821">
    <property type="term" value="F:histidine-tRNA ligase activity"/>
    <property type="evidence" value="ECO:0007669"/>
    <property type="project" value="TreeGrafter"/>
</dbReference>
<dbReference type="GO" id="GO:0006427">
    <property type="term" value="P:histidyl-tRNA aminoacylation"/>
    <property type="evidence" value="ECO:0007669"/>
    <property type="project" value="TreeGrafter"/>
</dbReference>
<dbReference type="GO" id="GO:0000105">
    <property type="term" value="P:L-histidine biosynthetic process"/>
    <property type="evidence" value="ECO:0007669"/>
    <property type="project" value="UniProtKB-UniRule"/>
</dbReference>
<dbReference type="Gene3D" id="3.30.930.10">
    <property type="entry name" value="Bira Bifunctional Protein, Domain 2"/>
    <property type="match status" value="1"/>
</dbReference>
<dbReference type="HAMAP" id="MF_00125">
    <property type="entry name" value="HisZ"/>
    <property type="match status" value="1"/>
</dbReference>
<dbReference type="InterPro" id="IPR045864">
    <property type="entry name" value="aa-tRNA-synth_II/BPL/LPL"/>
</dbReference>
<dbReference type="InterPro" id="IPR041715">
    <property type="entry name" value="HisRS-like_core"/>
</dbReference>
<dbReference type="InterPro" id="IPR004516">
    <property type="entry name" value="HisRS/HisZ"/>
</dbReference>
<dbReference type="InterPro" id="IPR004517">
    <property type="entry name" value="HisZ"/>
</dbReference>
<dbReference type="NCBIfam" id="TIGR00443">
    <property type="entry name" value="hisZ_biosyn_reg"/>
    <property type="match status" value="1"/>
</dbReference>
<dbReference type="NCBIfam" id="NF008939">
    <property type="entry name" value="PRK12292.2-1"/>
    <property type="match status" value="1"/>
</dbReference>
<dbReference type="PANTHER" id="PTHR43707:SF1">
    <property type="entry name" value="HISTIDINE--TRNA LIGASE, MITOCHONDRIAL-RELATED"/>
    <property type="match status" value="1"/>
</dbReference>
<dbReference type="PANTHER" id="PTHR43707">
    <property type="entry name" value="HISTIDYL-TRNA SYNTHETASE"/>
    <property type="match status" value="1"/>
</dbReference>
<dbReference type="Pfam" id="PF13393">
    <property type="entry name" value="tRNA-synt_His"/>
    <property type="match status" value="1"/>
</dbReference>
<dbReference type="PIRSF" id="PIRSF001549">
    <property type="entry name" value="His-tRNA_synth"/>
    <property type="match status" value="1"/>
</dbReference>
<dbReference type="SUPFAM" id="SSF55681">
    <property type="entry name" value="Class II aaRS and biotin synthetases"/>
    <property type="match status" value="1"/>
</dbReference>
<proteinExistence type="inferred from homology"/>
<protein>
    <recommendedName>
        <fullName evidence="1">ATP phosphoribosyltransferase regulatory subunit</fullName>
    </recommendedName>
</protein>
<comment type="function">
    <text evidence="1">Required for the first step of histidine biosynthesis. May allow the feedback regulation of ATP phosphoribosyltransferase activity by histidine.</text>
</comment>
<comment type="pathway">
    <text evidence="1">Amino-acid biosynthesis; L-histidine biosynthesis; L-histidine from 5-phospho-alpha-D-ribose 1-diphosphate: step 1/9.</text>
</comment>
<comment type="subunit">
    <text evidence="1">Heteromultimer composed of HisG and HisZ subunits.</text>
</comment>
<comment type="subcellular location">
    <subcellularLocation>
        <location evidence="1">Cytoplasm</location>
    </subcellularLocation>
</comment>
<comment type="miscellaneous">
    <text>This function is generally fulfilled by the C-terminal part of HisG, which is missing in some bacteria such as this one.</text>
</comment>
<comment type="similarity">
    <text evidence="1">Belongs to the class-II aminoacyl-tRNA synthetase family. HisZ subfamily.</text>
</comment>
<name>HISZ_PROM1</name>
<gene>
    <name evidence="1" type="primary">hisZ</name>
    <name type="ordered locus">NATL1_09801</name>
</gene>
<feature type="chain" id="PRO_1000016273" description="ATP phosphoribosyltransferase regulatory subunit">
    <location>
        <begin position="1"/>
        <end position="391"/>
    </location>
</feature>
<sequence length="391" mass="43906">MTLQPASGARDLNPQQVRKNHLIASKLSSLYQLWGYERISPPHIERLDTLTAAGGISNNEILKIVSDEPLGLRPEITASIVRAASTRFNEYERPLRFWSAGTSFKCNQSIDGGIDIEESFQSGVELIGTKAINAEIELLSLLIESLEVIEIDQKYKMTLLIGNTYLLELILSSFDSTKIDQIKKILCDLDYIALTTLDVKEEQRMFIKTIMNMRGKPEEVLTNLQNIYGSNSYIDKLKELFTIIEPLAKEKGIEVQLDPTLGTKYKLYSGLTFSLVSSSTSAPVTIAKGGRYDDLVKKFSSSAQNCYGIGFSISVDKVRELVSTSKEKLVNNVKVLIAYKQSANLYKALKQQKELHRKGIISVISHEPLKTNDETNQLLKSNRCNKIEWID</sequence>
<evidence type="ECO:0000255" key="1">
    <source>
        <dbReference type="HAMAP-Rule" id="MF_00125"/>
    </source>
</evidence>